<feature type="chain" id="PRO_1000120199" description="GMP synthase [glutamine-hydrolyzing]">
    <location>
        <begin position="1"/>
        <end position="523"/>
    </location>
</feature>
<feature type="domain" description="Glutamine amidotransferase type-1" evidence="1">
    <location>
        <begin position="8"/>
        <end position="205"/>
    </location>
</feature>
<feature type="domain" description="GMPS ATP-PPase" evidence="1">
    <location>
        <begin position="206"/>
        <end position="398"/>
    </location>
</feature>
<feature type="active site" description="Nucleophile" evidence="1">
    <location>
        <position position="85"/>
    </location>
</feature>
<feature type="active site" evidence="1">
    <location>
        <position position="179"/>
    </location>
</feature>
<feature type="active site" evidence="1">
    <location>
        <position position="181"/>
    </location>
</feature>
<feature type="binding site" evidence="1">
    <location>
        <begin position="233"/>
        <end position="239"/>
    </location>
    <ligand>
        <name>ATP</name>
        <dbReference type="ChEBI" id="CHEBI:30616"/>
    </ligand>
</feature>
<proteinExistence type="inferred from homology"/>
<sequence>MTNIHNHKILILDFGSQYTQLIARRVREIGVYCELWAWDVTEEQIREFNPTGIILSGGPESTTEENSPRAPEYVFNAGVPVLGICYGMQTMAMQLGGLTETSDHREFGYASVDLQATDALFAKLNDNLTASEPKLDVWMSHGDKVTRLPQGFQVTGITPTCPIAAMSDESRRFYGVQFHPEVTHTKSGLELLTNFVVGICGCECKWTAENIIERRVARIKEQVGDDEVILGLSGGVDSSVTALLLHRAIGKNLHCVFVDNGLLRLNEGDQVMEMFGDKFGLNIIRVNAEDRFLDALKGIDEPEAKRKTIGKVFVDVFDDESKKLTSVKWLAQGTIYPDVIESAASKTGKAHVIKSHHNVGGLPDYMKLGLVEPLRELFKDEVRKIGLALGLPAEMLNRHPFPGPGLGVRVLGEIKKEYCDLLRKADAIFIEELYKADWYYKVSQAFTVFLPVKSVGVMGDGRKYDWVVSLRAVETIDFMTAHWAHLPYDLLGKISNRIINEVNGISRVVYDVSGKPPATIEWE</sequence>
<name>GUAA_ACTP2</name>
<comment type="function">
    <text evidence="1">Catalyzes the synthesis of GMP from XMP.</text>
</comment>
<comment type="catalytic activity">
    <reaction evidence="1">
        <text>XMP + L-glutamine + ATP + H2O = GMP + L-glutamate + AMP + diphosphate + 2 H(+)</text>
        <dbReference type="Rhea" id="RHEA:11680"/>
        <dbReference type="ChEBI" id="CHEBI:15377"/>
        <dbReference type="ChEBI" id="CHEBI:15378"/>
        <dbReference type="ChEBI" id="CHEBI:29985"/>
        <dbReference type="ChEBI" id="CHEBI:30616"/>
        <dbReference type="ChEBI" id="CHEBI:33019"/>
        <dbReference type="ChEBI" id="CHEBI:57464"/>
        <dbReference type="ChEBI" id="CHEBI:58115"/>
        <dbReference type="ChEBI" id="CHEBI:58359"/>
        <dbReference type="ChEBI" id="CHEBI:456215"/>
        <dbReference type="EC" id="6.3.5.2"/>
    </reaction>
</comment>
<comment type="pathway">
    <text evidence="1">Purine metabolism; GMP biosynthesis; GMP from XMP (L-Gln route): step 1/1.</text>
</comment>
<comment type="subunit">
    <text evidence="1">Homodimer.</text>
</comment>
<keyword id="KW-0067">ATP-binding</keyword>
<keyword id="KW-0315">Glutamine amidotransferase</keyword>
<keyword id="KW-0332">GMP biosynthesis</keyword>
<keyword id="KW-0436">Ligase</keyword>
<keyword id="KW-0547">Nucleotide-binding</keyword>
<keyword id="KW-0658">Purine biosynthesis</keyword>
<keyword id="KW-1185">Reference proteome</keyword>
<reference key="1">
    <citation type="journal article" date="2008" name="J. Bacteriol.">
        <title>The complete genome sequence of Actinobacillus pleuropneumoniae L20 (serotype 5b).</title>
        <authorList>
            <person name="Foote S.J."/>
            <person name="Bosse J.T."/>
            <person name="Bouevitch A.B."/>
            <person name="Langford P.R."/>
            <person name="Young N.M."/>
            <person name="Nash J.H.E."/>
        </authorList>
    </citation>
    <scope>NUCLEOTIDE SEQUENCE [LARGE SCALE GENOMIC DNA]</scope>
    <source>
        <strain>L20</strain>
    </source>
</reference>
<dbReference type="EC" id="6.3.5.2" evidence="1"/>
<dbReference type="EMBL" id="CP000569">
    <property type="protein sequence ID" value="ABN73694.1"/>
    <property type="molecule type" value="Genomic_DNA"/>
</dbReference>
<dbReference type="RefSeq" id="WP_011848435.1">
    <property type="nucleotide sequence ID" value="NC_009053.1"/>
</dbReference>
<dbReference type="SMR" id="A3MZV8"/>
<dbReference type="STRING" id="416269.APL_0592"/>
<dbReference type="MEROPS" id="C26.957"/>
<dbReference type="EnsemblBacteria" id="ABN73694">
    <property type="protein sequence ID" value="ABN73694"/>
    <property type="gene ID" value="APL_0592"/>
</dbReference>
<dbReference type="KEGG" id="apl:APL_0592"/>
<dbReference type="PATRIC" id="fig|416269.6.peg.623"/>
<dbReference type="eggNOG" id="COG0518">
    <property type="taxonomic scope" value="Bacteria"/>
</dbReference>
<dbReference type="eggNOG" id="COG0519">
    <property type="taxonomic scope" value="Bacteria"/>
</dbReference>
<dbReference type="HOGENOM" id="CLU_014340_0_5_6"/>
<dbReference type="UniPathway" id="UPA00189">
    <property type="reaction ID" value="UER00296"/>
</dbReference>
<dbReference type="Proteomes" id="UP000001432">
    <property type="component" value="Chromosome"/>
</dbReference>
<dbReference type="GO" id="GO:0005829">
    <property type="term" value="C:cytosol"/>
    <property type="evidence" value="ECO:0007669"/>
    <property type="project" value="TreeGrafter"/>
</dbReference>
<dbReference type="GO" id="GO:0005524">
    <property type="term" value="F:ATP binding"/>
    <property type="evidence" value="ECO:0007669"/>
    <property type="project" value="UniProtKB-UniRule"/>
</dbReference>
<dbReference type="GO" id="GO:0003921">
    <property type="term" value="F:GMP synthase activity"/>
    <property type="evidence" value="ECO:0007669"/>
    <property type="project" value="InterPro"/>
</dbReference>
<dbReference type="CDD" id="cd01742">
    <property type="entry name" value="GATase1_GMP_Synthase"/>
    <property type="match status" value="1"/>
</dbReference>
<dbReference type="CDD" id="cd01997">
    <property type="entry name" value="GMP_synthase_C"/>
    <property type="match status" value="1"/>
</dbReference>
<dbReference type="FunFam" id="3.30.300.10:FF:000002">
    <property type="entry name" value="GMP synthase [glutamine-hydrolyzing]"/>
    <property type="match status" value="1"/>
</dbReference>
<dbReference type="FunFam" id="3.40.50.620:FF:000001">
    <property type="entry name" value="GMP synthase [glutamine-hydrolyzing]"/>
    <property type="match status" value="1"/>
</dbReference>
<dbReference type="FunFam" id="3.40.50.880:FF:000001">
    <property type="entry name" value="GMP synthase [glutamine-hydrolyzing]"/>
    <property type="match status" value="1"/>
</dbReference>
<dbReference type="Gene3D" id="3.30.300.10">
    <property type="match status" value="1"/>
</dbReference>
<dbReference type="Gene3D" id="3.40.50.880">
    <property type="match status" value="1"/>
</dbReference>
<dbReference type="Gene3D" id="3.40.50.620">
    <property type="entry name" value="HUPs"/>
    <property type="match status" value="1"/>
</dbReference>
<dbReference type="HAMAP" id="MF_00344">
    <property type="entry name" value="GMP_synthase"/>
    <property type="match status" value="1"/>
</dbReference>
<dbReference type="InterPro" id="IPR029062">
    <property type="entry name" value="Class_I_gatase-like"/>
</dbReference>
<dbReference type="InterPro" id="IPR017926">
    <property type="entry name" value="GATASE"/>
</dbReference>
<dbReference type="InterPro" id="IPR001674">
    <property type="entry name" value="GMP_synth_C"/>
</dbReference>
<dbReference type="InterPro" id="IPR004739">
    <property type="entry name" value="GMP_synth_GATase"/>
</dbReference>
<dbReference type="InterPro" id="IPR022955">
    <property type="entry name" value="GMP_synthase"/>
</dbReference>
<dbReference type="InterPro" id="IPR025777">
    <property type="entry name" value="GMPS_ATP_PPase_dom"/>
</dbReference>
<dbReference type="InterPro" id="IPR022310">
    <property type="entry name" value="NAD/GMP_synthase"/>
</dbReference>
<dbReference type="InterPro" id="IPR014729">
    <property type="entry name" value="Rossmann-like_a/b/a_fold"/>
</dbReference>
<dbReference type="NCBIfam" id="TIGR00884">
    <property type="entry name" value="guaA_Cterm"/>
    <property type="match status" value="1"/>
</dbReference>
<dbReference type="NCBIfam" id="TIGR00888">
    <property type="entry name" value="guaA_Nterm"/>
    <property type="match status" value="1"/>
</dbReference>
<dbReference type="NCBIfam" id="NF000848">
    <property type="entry name" value="PRK00074.1"/>
    <property type="match status" value="1"/>
</dbReference>
<dbReference type="PANTHER" id="PTHR11922:SF2">
    <property type="entry name" value="GMP SYNTHASE [GLUTAMINE-HYDROLYZING]"/>
    <property type="match status" value="1"/>
</dbReference>
<dbReference type="PANTHER" id="PTHR11922">
    <property type="entry name" value="GMP SYNTHASE-RELATED"/>
    <property type="match status" value="1"/>
</dbReference>
<dbReference type="Pfam" id="PF00117">
    <property type="entry name" value="GATase"/>
    <property type="match status" value="1"/>
</dbReference>
<dbReference type="Pfam" id="PF00958">
    <property type="entry name" value="GMP_synt_C"/>
    <property type="match status" value="1"/>
</dbReference>
<dbReference type="Pfam" id="PF02540">
    <property type="entry name" value="NAD_synthase"/>
    <property type="match status" value="1"/>
</dbReference>
<dbReference type="PRINTS" id="PR00097">
    <property type="entry name" value="ANTSNTHASEII"/>
</dbReference>
<dbReference type="PRINTS" id="PR00099">
    <property type="entry name" value="CPSGATASE"/>
</dbReference>
<dbReference type="PRINTS" id="PR00096">
    <property type="entry name" value="GATASE"/>
</dbReference>
<dbReference type="SUPFAM" id="SSF52402">
    <property type="entry name" value="Adenine nucleotide alpha hydrolases-like"/>
    <property type="match status" value="1"/>
</dbReference>
<dbReference type="SUPFAM" id="SSF52317">
    <property type="entry name" value="Class I glutamine amidotransferase-like"/>
    <property type="match status" value="1"/>
</dbReference>
<dbReference type="SUPFAM" id="SSF54810">
    <property type="entry name" value="GMP synthetase C-terminal dimerisation domain"/>
    <property type="match status" value="1"/>
</dbReference>
<dbReference type="PROSITE" id="PS51273">
    <property type="entry name" value="GATASE_TYPE_1"/>
    <property type="match status" value="1"/>
</dbReference>
<dbReference type="PROSITE" id="PS51553">
    <property type="entry name" value="GMPS_ATP_PPASE"/>
    <property type="match status" value="1"/>
</dbReference>
<evidence type="ECO:0000255" key="1">
    <source>
        <dbReference type="HAMAP-Rule" id="MF_00344"/>
    </source>
</evidence>
<organism>
    <name type="scientific">Actinobacillus pleuropneumoniae serotype 5b (strain L20)</name>
    <dbReference type="NCBI Taxonomy" id="416269"/>
    <lineage>
        <taxon>Bacteria</taxon>
        <taxon>Pseudomonadati</taxon>
        <taxon>Pseudomonadota</taxon>
        <taxon>Gammaproteobacteria</taxon>
        <taxon>Pasteurellales</taxon>
        <taxon>Pasteurellaceae</taxon>
        <taxon>Actinobacillus</taxon>
    </lineage>
</organism>
<accession>A3MZV8</accession>
<gene>
    <name evidence="1" type="primary">guaA</name>
    <name type="ordered locus">APL_0592</name>
</gene>
<protein>
    <recommendedName>
        <fullName evidence="1">GMP synthase [glutamine-hydrolyzing]</fullName>
        <ecNumber evidence="1">6.3.5.2</ecNumber>
    </recommendedName>
    <alternativeName>
        <fullName evidence="1">GMP synthetase</fullName>
    </alternativeName>
    <alternativeName>
        <fullName evidence="1">Glutamine amidotransferase</fullName>
    </alternativeName>
</protein>